<protein>
    <recommendedName>
        <fullName>Snaclec convulxin subunit beta homolog</fullName>
    </recommendedName>
</protein>
<accession>P0CV88</accession>
<sequence length="13" mass="1465">GFCCPSGWSSYDR</sequence>
<name>SLBH_CROAT</name>
<comment type="function">
    <text evidence="1">Activates platelets by binding to the platelet collagen receptor glycoprotein VI (GP6).</text>
</comment>
<comment type="subunit">
    <text evidence="1">Tetramer of heterodimers of alpha and beta subunits (alphabeta)(4); disulfide-linked.</text>
</comment>
<comment type="subcellular location">
    <subcellularLocation>
        <location>Secreted</location>
    </subcellularLocation>
</comment>
<comment type="tissue specificity">
    <text>Expressed by the venom gland.</text>
</comment>
<comment type="similarity">
    <text evidence="3">Belongs to the snaclec family.</text>
</comment>
<keyword id="KW-0903">Direct protein sequencing</keyword>
<keyword id="KW-1015">Disulfide bond</keyword>
<keyword id="KW-1199">Hemostasis impairing toxin</keyword>
<keyword id="KW-1202">Platelet aggregation activating toxin</keyword>
<keyword id="KW-0964">Secreted</keyword>
<keyword id="KW-0800">Toxin</keyword>
<organism>
    <name type="scientific">Crotalus atrox</name>
    <name type="common">Western diamondback rattlesnake</name>
    <dbReference type="NCBI Taxonomy" id="8730"/>
    <lineage>
        <taxon>Eukaryota</taxon>
        <taxon>Metazoa</taxon>
        <taxon>Chordata</taxon>
        <taxon>Craniata</taxon>
        <taxon>Vertebrata</taxon>
        <taxon>Euteleostomi</taxon>
        <taxon>Lepidosauria</taxon>
        <taxon>Squamata</taxon>
        <taxon>Bifurcata</taxon>
        <taxon>Unidentata</taxon>
        <taxon>Episquamata</taxon>
        <taxon>Toxicofera</taxon>
        <taxon>Serpentes</taxon>
        <taxon>Colubroidea</taxon>
        <taxon>Viperidae</taxon>
        <taxon>Crotalinae</taxon>
        <taxon>Crotalus</taxon>
    </lineage>
</organism>
<feature type="chain" id="PRO_0000407586" description="Snaclec convulxin subunit beta homolog">
    <location>
        <begin position="1"/>
        <end position="13" status="greater than"/>
    </location>
</feature>
<feature type="domain" description="C-type lectin" evidence="2">
    <location>
        <begin position="11"/>
        <end position="13" status="greater than"/>
    </location>
</feature>
<feature type="disulfide bond" description="Interchain (with subunit alpha)" evidence="2">
    <location>
        <position position="3"/>
    </location>
</feature>
<feature type="disulfide bond" evidence="2">
    <location>
        <begin position="4"/>
        <end status="unknown"/>
    </location>
</feature>
<feature type="non-terminal residue">
    <location>
        <position position="13"/>
    </location>
</feature>
<proteinExistence type="evidence at protein level"/>
<evidence type="ECO:0000250" key="1"/>
<evidence type="ECO:0000255" key="2">
    <source>
        <dbReference type="PROSITE-ProRule" id="PRU00040"/>
    </source>
</evidence>
<evidence type="ECO:0000305" key="3"/>
<reference key="1">
    <citation type="journal article" date="2009" name="J. Proteome Res.">
        <title>Exploring the venom proteome of the western diamondback rattlesnake, Crotalus atrox, via snake venomics and combinatorial peptide ligand library approaches.</title>
        <authorList>
            <person name="Calvete J.J."/>
            <person name="Fasoli E."/>
            <person name="Sanz L."/>
            <person name="Boschetti E."/>
            <person name="Righetti P.G."/>
        </authorList>
    </citation>
    <scope>PROTEIN SEQUENCE</scope>
    <scope>IDENTIFICATION BY MASS SPECTROMETRY</scope>
    <source>
        <tissue>Venom</tissue>
    </source>
</reference>
<dbReference type="GO" id="GO:0005576">
    <property type="term" value="C:extracellular region"/>
    <property type="evidence" value="ECO:0007669"/>
    <property type="project" value="UniProtKB-SubCell"/>
</dbReference>
<dbReference type="GO" id="GO:0090729">
    <property type="term" value="F:toxin activity"/>
    <property type="evidence" value="ECO:0007669"/>
    <property type="project" value="UniProtKB-KW"/>
</dbReference>